<name>FB143_ARATH</name>
<keyword id="KW-1185">Reference proteome</keyword>
<protein>
    <recommendedName>
        <fullName>Putative F-box protein At3g13825</fullName>
    </recommendedName>
</protein>
<sequence>MTTLSNLSVDLVGEIFSRVPLISLSEVRCTCTTWNTLSWNILSENYVFGKADTSKQFLGFVVMNSKVCSLRLDLQGIHNNDFVDPSLKEINIVDQYDISNIFHCDGLLLCVRWIQPRSKYHKFHRLDMYAFGYDKQQQEPDEETVTLSCIRDEQLAVLYQPYDLCLDLFMEI</sequence>
<gene>
    <name type="ordered locus">At3g13825</name>
    <name type="ORF">MCP4.4</name>
</gene>
<feature type="chain" id="PRO_0000283413" description="Putative F-box protein At3g13825">
    <location>
        <begin position="1"/>
        <end position="172"/>
    </location>
</feature>
<feature type="domain" description="F-box">
    <location>
        <begin position="1"/>
        <end position="51"/>
    </location>
</feature>
<proteinExistence type="predicted"/>
<dbReference type="EMBL" id="AB028610">
    <property type="protein sequence ID" value="BAB02906.1"/>
    <property type="molecule type" value="Genomic_DNA"/>
</dbReference>
<dbReference type="EMBL" id="CP002686">
    <property type="status" value="NOT_ANNOTATED_CDS"/>
    <property type="molecule type" value="Genomic_DNA"/>
</dbReference>
<dbReference type="FunCoup" id="Q9LRW5">
    <property type="interactions" value="33"/>
</dbReference>
<dbReference type="STRING" id="3702.Q9LRW5"/>
<dbReference type="Araport" id="AT3G13825"/>
<dbReference type="TAIR" id="AT3G13825"/>
<dbReference type="InParanoid" id="Q9LRW5"/>
<dbReference type="PRO" id="PR:Q9LRW5"/>
<dbReference type="Proteomes" id="UP000006548">
    <property type="component" value="Chromosome 3"/>
</dbReference>
<dbReference type="ExpressionAtlas" id="Q9LRW5">
    <property type="expression patterns" value="baseline and differential"/>
</dbReference>
<dbReference type="InterPro" id="IPR036047">
    <property type="entry name" value="F-box-like_dom_sf"/>
</dbReference>
<dbReference type="InterPro" id="IPR001810">
    <property type="entry name" value="F-box_dom"/>
</dbReference>
<dbReference type="Pfam" id="PF00646">
    <property type="entry name" value="F-box"/>
    <property type="match status" value="1"/>
</dbReference>
<dbReference type="SMART" id="SM00256">
    <property type="entry name" value="FBOX"/>
    <property type="match status" value="1"/>
</dbReference>
<dbReference type="SUPFAM" id="SSF81383">
    <property type="entry name" value="F-box domain"/>
    <property type="match status" value="1"/>
</dbReference>
<organism>
    <name type="scientific">Arabidopsis thaliana</name>
    <name type="common">Mouse-ear cress</name>
    <dbReference type="NCBI Taxonomy" id="3702"/>
    <lineage>
        <taxon>Eukaryota</taxon>
        <taxon>Viridiplantae</taxon>
        <taxon>Streptophyta</taxon>
        <taxon>Embryophyta</taxon>
        <taxon>Tracheophyta</taxon>
        <taxon>Spermatophyta</taxon>
        <taxon>Magnoliopsida</taxon>
        <taxon>eudicotyledons</taxon>
        <taxon>Gunneridae</taxon>
        <taxon>Pentapetalae</taxon>
        <taxon>rosids</taxon>
        <taxon>malvids</taxon>
        <taxon>Brassicales</taxon>
        <taxon>Brassicaceae</taxon>
        <taxon>Camelineae</taxon>
        <taxon>Arabidopsis</taxon>
    </lineage>
</organism>
<reference key="1">
    <citation type="journal article" date="2000" name="DNA Res.">
        <title>Structural analysis of Arabidopsis thaliana chromosome 3. I. Sequence features of the regions of 4,504,864 bp covered by sixty P1 and TAC clones.</title>
        <authorList>
            <person name="Sato S."/>
            <person name="Nakamura Y."/>
            <person name="Kaneko T."/>
            <person name="Katoh T."/>
            <person name="Asamizu E."/>
            <person name="Tabata S."/>
        </authorList>
    </citation>
    <scope>NUCLEOTIDE SEQUENCE [LARGE SCALE GENOMIC DNA]</scope>
    <source>
        <strain>cv. Columbia</strain>
    </source>
</reference>
<reference key="2">
    <citation type="journal article" date="2017" name="Plant J.">
        <title>Araport11: a complete reannotation of the Arabidopsis thaliana reference genome.</title>
        <authorList>
            <person name="Cheng C.Y."/>
            <person name="Krishnakumar V."/>
            <person name="Chan A.P."/>
            <person name="Thibaud-Nissen F."/>
            <person name="Schobel S."/>
            <person name="Town C.D."/>
        </authorList>
    </citation>
    <scope>GENOME REANNOTATION</scope>
    <source>
        <strain>cv. Columbia</strain>
    </source>
</reference>
<accession>Q9LRW5</accession>